<comment type="function">
    <text evidence="2">Catalyzes the oxidative phosphorylation of glyceraldehyde 3-phosphate (G3P) to 1,3-bisphosphoglycerate (BPG) using the cofactor NAD. The first reaction step involves the formation of a hemiacetal intermediate between G3P and a cysteine residue, and this hemiacetal intermediate is then oxidized to a thioester, with concomitant reduction of NAD to NADH. The reduced NADH is then exchanged with the second NAD, and the thioester is attacked by a nucleophilic inorganic phosphate to produce BPG.</text>
</comment>
<comment type="catalytic activity">
    <reaction evidence="2">
        <text>D-glyceraldehyde 3-phosphate + phosphate + NAD(+) = (2R)-3-phospho-glyceroyl phosphate + NADH + H(+)</text>
        <dbReference type="Rhea" id="RHEA:10300"/>
        <dbReference type="ChEBI" id="CHEBI:15378"/>
        <dbReference type="ChEBI" id="CHEBI:43474"/>
        <dbReference type="ChEBI" id="CHEBI:57540"/>
        <dbReference type="ChEBI" id="CHEBI:57604"/>
        <dbReference type="ChEBI" id="CHEBI:57945"/>
        <dbReference type="ChEBI" id="CHEBI:59776"/>
        <dbReference type="EC" id="1.2.1.12"/>
    </reaction>
</comment>
<comment type="pathway">
    <text evidence="3">Carbohydrate degradation; glycolysis; pyruvate from D-glyceraldehyde 3-phosphate: step 1/5.</text>
</comment>
<comment type="subunit">
    <text evidence="2">Homotetramer.</text>
</comment>
<comment type="subcellular location">
    <subcellularLocation>
        <location evidence="3">Cytoplasm</location>
    </subcellularLocation>
</comment>
<comment type="similarity">
    <text evidence="3">Belongs to the glyceraldehyde-3-phosphate dehydrogenase family.</text>
</comment>
<proteinExistence type="evidence at protein level"/>
<organism>
    <name type="scientific">Salmonella typhimurium (strain LT2 / SGSC1412 / ATCC 700720)</name>
    <dbReference type="NCBI Taxonomy" id="99287"/>
    <lineage>
        <taxon>Bacteria</taxon>
        <taxon>Pseudomonadati</taxon>
        <taxon>Pseudomonadota</taxon>
        <taxon>Gammaproteobacteria</taxon>
        <taxon>Enterobacterales</taxon>
        <taxon>Enterobacteriaceae</taxon>
        <taxon>Salmonella</taxon>
    </lineage>
</organism>
<gene>
    <name type="primary">gapA</name>
    <name type="synonym">gap</name>
    <name type="ordered locus">STM1290</name>
</gene>
<accession>P0A1P0</accession>
<accession>P24165</accession>
<protein>
    <recommendedName>
        <fullName evidence="2">Glyceraldehyde-3-phosphate dehydrogenase</fullName>
        <shortName evidence="2">GAPDH</shortName>
        <ecNumber evidence="2">1.2.1.12</ecNumber>
    </recommendedName>
    <alternativeName>
        <fullName evidence="2">NAD-dependent glyceraldehyde-3-phosphate dehydrogenase</fullName>
    </alternativeName>
</protein>
<evidence type="ECO:0000250" key="1"/>
<evidence type="ECO:0000250" key="2">
    <source>
        <dbReference type="UniProtKB" id="P0A9B2"/>
    </source>
</evidence>
<evidence type="ECO:0000305" key="3"/>
<dbReference type="EC" id="1.2.1.12" evidence="2"/>
<dbReference type="EMBL" id="AE006468">
    <property type="protein sequence ID" value="AAL20215.1"/>
    <property type="molecule type" value="Genomic_DNA"/>
</dbReference>
<dbReference type="EMBL" id="M63369">
    <property type="protein sequence ID" value="AAA27114.1"/>
    <property type="molecule type" value="Genomic_DNA"/>
</dbReference>
<dbReference type="RefSeq" id="NP_460256.1">
    <property type="nucleotide sequence ID" value="NC_003197.2"/>
</dbReference>
<dbReference type="RefSeq" id="WP_000153505.1">
    <property type="nucleotide sequence ID" value="NC_003197.2"/>
</dbReference>
<dbReference type="PDB" id="8I7E">
    <property type="method" value="X-ray"/>
    <property type="resolution" value="2.05 A"/>
    <property type="chains" value="A/B=1-331"/>
</dbReference>
<dbReference type="PDBsum" id="8I7E"/>
<dbReference type="SMR" id="P0A1P0"/>
<dbReference type="STRING" id="99287.STM1290"/>
<dbReference type="PaxDb" id="99287-STM1290"/>
<dbReference type="GeneID" id="1252808"/>
<dbReference type="KEGG" id="stm:STM1290"/>
<dbReference type="PATRIC" id="fig|99287.12.peg.1371"/>
<dbReference type="HOGENOM" id="CLU_030140_0_3_6"/>
<dbReference type="OMA" id="YGYTCNM"/>
<dbReference type="PhylomeDB" id="P0A1P0"/>
<dbReference type="BioCyc" id="SENT99287:STM1290-MONOMER"/>
<dbReference type="UniPathway" id="UPA00109">
    <property type="reaction ID" value="UER00184"/>
</dbReference>
<dbReference type="Proteomes" id="UP000001014">
    <property type="component" value="Chromosome"/>
</dbReference>
<dbReference type="GO" id="GO:0005737">
    <property type="term" value="C:cytoplasm"/>
    <property type="evidence" value="ECO:0007669"/>
    <property type="project" value="UniProtKB-SubCell"/>
</dbReference>
<dbReference type="GO" id="GO:0004365">
    <property type="term" value="F:glyceraldehyde-3-phosphate dehydrogenase (NAD+) (phosphorylating) activity"/>
    <property type="evidence" value="ECO:0000250"/>
    <property type="project" value="UniProtKB"/>
</dbReference>
<dbReference type="GO" id="GO:0051287">
    <property type="term" value="F:NAD binding"/>
    <property type="evidence" value="ECO:0000250"/>
    <property type="project" value="UniProtKB"/>
</dbReference>
<dbReference type="GO" id="GO:0050661">
    <property type="term" value="F:NADP binding"/>
    <property type="evidence" value="ECO:0007669"/>
    <property type="project" value="InterPro"/>
</dbReference>
<dbReference type="GO" id="GO:0006006">
    <property type="term" value="P:glucose metabolic process"/>
    <property type="evidence" value="ECO:0007669"/>
    <property type="project" value="InterPro"/>
</dbReference>
<dbReference type="GO" id="GO:0006096">
    <property type="term" value="P:glycolytic process"/>
    <property type="evidence" value="ECO:0007669"/>
    <property type="project" value="UniProtKB-UniPathway"/>
</dbReference>
<dbReference type="CDD" id="cd18126">
    <property type="entry name" value="GAPDH_I_C"/>
    <property type="match status" value="1"/>
</dbReference>
<dbReference type="CDD" id="cd05214">
    <property type="entry name" value="GAPDH_I_N"/>
    <property type="match status" value="1"/>
</dbReference>
<dbReference type="FunFam" id="3.30.360.10:FF:000001">
    <property type="entry name" value="Glyceraldehyde-3-phosphate dehydrogenase"/>
    <property type="match status" value="1"/>
</dbReference>
<dbReference type="FunFam" id="3.40.50.720:FF:000001">
    <property type="entry name" value="Glyceraldehyde-3-phosphate dehydrogenase"/>
    <property type="match status" value="1"/>
</dbReference>
<dbReference type="Gene3D" id="3.30.360.10">
    <property type="entry name" value="Dihydrodipicolinate Reductase, domain 2"/>
    <property type="match status" value="1"/>
</dbReference>
<dbReference type="Gene3D" id="3.40.50.720">
    <property type="entry name" value="NAD(P)-binding Rossmann-like Domain"/>
    <property type="match status" value="1"/>
</dbReference>
<dbReference type="InterPro" id="IPR020831">
    <property type="entry name" value="GlycerAld/Erythrose_P_DH"/>
</dbReference>
<dbReference type="InterPro" id="IPR020830">
    <property type="entry name" value="GlycerAld_3-P_DH_AS"/>
</dbReference>
<dbReference type="InterPro" id="IPR020829">
    <property type="entry name" value="GlycerAld_3-P_DH_cat"/>
</dbReference>
<dbReference type="InterPro" id="IPR020828">
    <property type="entry name" value="GlycerAld_3-P_DH_NAD(P)-bd"/>
</dbReference>
<dbReference type="InterPro" id="IPR006424">
    <property type="entry name" value="Glyceraldehyde-3-P_DH_1"/>
</dbReference>
<dbReference type="InterPro" id="IPR036291">
    <property type="entry name" value="NAD(P)-bd_dom_sf"/>
</dbReference>
<dbReference type="NCBIfam" id="TIGR01534">
    <property type="entry name" value="GAPDH-I"/>
    <property type="match status" value="1"/>
</dbReference>
<dbReference type="NCBIfam" id="NF011954">
    <property type="entry name" value="PRK15425.1"/>
    <property type="match status" value="1"/>
</dbReference>
<dbReference type="PANTHER" id="PTHR10836">
    <property type="entry name" value="GLYCERALDEHYDE 3-PHOSPHATE DEHYDROGENASE"/>
    <property type="match status" value="1"/>
</dbReference>
<dbReference type="PANTHER" id="PTHR10836:SF76">
    <property type="entry name" value="GLYCERALDEHYDE-3-PHOSPHATE DEHYDROGENASE-RELATED"/>
    <property type="match status" value="1"/>
</dbReference>
<dbReference type="Pfam" id="PF02800">
    <property type="entry name" value="Gp_dh_C"/>
    <property type="match status" value="1"/>
</dbReference>
<dbReference type="Pfam" id="PF00044">
    <property type="entry name" value="Gp_dh_N"/>
    <property type="match status" value="1"/>
</dbReference>
<dbReference type="PIRSF" id="PIRSF000149">
    <property type="entry name" value="GAP_DH"/>
    <property type="match status" value="1"/>
</dbReference>
<dbReference type="PRINTS" id="PR00078">
    <property type="entry name" value="G3PDHDRGNASE"/>
</dbReference>
<dbReference type="SMART" id="SM00846">
    <property type="entry name" value="Gp_dh_N"/>
    <property type="match status" value="1"/>
</dbReference>
<dbReference type="SUPFAM" id="SSF55347">
    <property type="entry name" value="Glyceraldehyde-3-phosphate dehydrogenase-like, C-terminal domain"/>
    <property type="match status" value="1"/>
</dbReference>
<dbReference type="SUPFAM" id="SSF51735">
    <property type="entry name" value="NAD(P)-binding Rossmann-fold domains"/>
    <property type="match status" value="1"/>
</dbReference>
<dbReference type="PROSITE" id="PS00071">
    <property type="entry name" value="GAPDH"/>
    <property type="match status" value="1"/>
</dbReference>
<sequence length="331" mass="35587">MTIKVGINGFGRIGRIVFRAAQKRSDIEIVAINDLLDAEYMAYMLKYDSTHGRFDGTVEVKDGHLIVNGKKIRVTAERDPANLKWDEVGVDVVAEATGIFLTDETARKHITAGAKKVVLTGPSKDNTPMFVKGANFDKYEGQDIVSNASCTTNCLAPLAKVINDNFGIIEGLMTTVHATTATQKTVDGPSHKDWRGGRGASQNIIPSSTGAAKAVGKVLPELNGKLTGMAFRVPTPNVSVVDLTVRLEKAATYEQIKAAVKAAAEGEMKGVLGYTEDDVVSTDFNGEVCTSVFDAKAGIALNDNFVKLVSWYDNETGYSNKVLDLIAHISK</sequence>
<feature type="initiator methionine" description="Removed" evidence="1">
    <location>
        <position position="1"/>
    </location>
</feature>
<feature type="chain" id="PRO_0000145677" description="Glyceraldehyde-3-phosphate dehydrogenase">
    <location>
        <begin position="2"/>
        <end position="331"/>
    </location>
</feature>
<feature type="active site" description="Nucleophile" evidence="2">
    <location>
        <position position="150"/>
    </location>
</feature>
<feature type="binding site" evidence="2">
    <location>
        <begin position="12"/>
        <end position="13"/>
    </location>
    <ligand>
        <name>NAD(+)</name>
        <dbReference type="ChEBI" id="CHEBI:57540"/>
    </ligand>
</feature>
<feature type="binding site" evidence="2">
    <location>
        <position position="34"/>
    </location>
    <ligand>
        <name>NAD(+)</name>
        <dbReference type="ChEBI" id="CHEBI:57540"/>
    </ligand>
</feature>
<feature type="binding site" evidence="2">
    <location>
        <position position="78"/>
    </location>
    <ligand>
        <name>NAD(+)</name>
        <dbReference type="ChEBI" id="CHEBI:57540"/>
    </ligand>
</feature>
<feature type="binding site" evidence="2">
    <location>
        <position position="120"/>
    </location>
    <ligand>
        <name>NAD(+)</name>
        <dbReference type="ChEBI" id="CHEBI:57540"/>
    </ligand>
</feature>
<feature type="binding site" evidence="2">
    <location>
        <begin position="149"/>
        <end position="151"/>
    </location>
    <ligand>
        <name>D-glyceraldehyde 3-phosphate</name>
        <dbReference type="ChEBI" id="CHEBI:59776"/>
    </ligand>
</feature>
<feature type="binding site" evidence="2">
    <location>
        <position position="180"/>
    </location>
    <ligand>
        <name>D-glyceraldehyde 3-phosphate</name>
        <dbReference type="ChEBI" id="CHEBI:59776"/>
    </ligand>
</feature>
<feature type="binding site" evidence="2">
    <location>
        <begin position="209"/>
        <end position="210"/>
    </location>
    <ligand>
        <name>D-glyceraldehyde 3-phosphate</name>
        <dbReference type="ChEBI" id="CHEBI:59776"/>
    </ligand>
</feature>
<feature type="binding site" evidence="2">
    <location>
        <position position="232"/>
    </location>
    <ligand>
        <name>D-glyceraldehyde 3-phosphate</name>
        <dbReference type="ChEBI" id="CHEBI:59776"/>
    </ligand>
</feature>
<feature type="binding site" evidence="2">
    <location>
        <position position="314"/>
    </location>
    <ligand>
        <name>NAD(+)</name>
        <dbReference type="ChEBI" id="CHEBI:57540"/>
    </ligand>
</feature>
<feature type="site" description="Activates thiol group during catalysis" evidence="2">
    <location>
        <position position="177"/>
    </location>
</feature>
<feature type="sequence conflict" description="In Ref. 2; AAA27114." evidence="3" ref="2">
    <original>E</original>
    <variation>D</variation>
    <location>
        <position position="95"/>
    </location>
</feature>
<feature type="sequence conflict" description="In Ref. 2; AAA27114." evidence="3" ref="2">
    <original>G</original>
    <variation>V</variation>
    <location>
        <position position="98"/>
    </location>
</feature>
<reference key="1">
    <citation type="journal article" date="2001" name="Nature">
        <title>Complete genome sequence of Salmonella enterica serovar Typhimurium LT2.</title>
        <authorList>
            <person name="McClelland M."/>
            <person name="Sanderson K.E."/>
            <person name="Spieth J."/>
            <person name="Clifton S.W."/>
            <person name="Latreille P."/>
            <person name="Courtney L."/>
            <person name="Porwollik S."/>
            <person name="Ali J."/>
            <person name="Dante M."/>
            <person name="Du F."/>
            <person name="Hou S."/>
            <person name="Layman D."/>
            <person name="Leonard S."/>
            <person name="Nguyen C."/>
            <person name="Scott K."/>
            <person name="Holmes A."/>
            <person name="Grewal N."/>
            <person name="Mulvaney E."/>
            <person name="Ryan E."/>
            <person name="Sun H."/>
            <person name="Florea L."/>
            <person name="Miller W."/>
            <person name="Stoneking T."/>
            <person name="Nhan M."/>
            <person name="Waterston R."/>
            <person name="Wilson R.K."/>
        </authorList>
    </citation>
    <scope>NUCLEOTIDE SEQUENCE [LARGE SCALE GENOMIC DNA]</scope>
    <source>
        <strain>LT2 / SGSC1412 / ATCC 700720</strain>
    </source>
</reference>
<reference key="2">
    <citation type="journal article" date="1991" name="J. Gen. Microbiol.">
        <title>Molecular and evolutionary relationships among enteric bacteria.</title>
        <authorList>
            <person name="Lawrence J.G."/>
            <person name="Ochman H."/>
            <person name="Hartl D.L."/>
        </authorList>
    </citation>
    <scope>NUCLEOTIDE SEQUENCE [GENOMIC DNA] OF 16-309</scope>
    <source>
        <strain>LT2</strain>
    </source>
</reference>
<keyword id="KW-0002">3D-structure</keyword>
<keyword id="KW-0963">Cytoplasm</keyword>
<keyword id="KW-0324">Glycolysis</keyword>
<keyword id="KW-0520">NAD</keyword>
<keyword id="KW-0547">Nucleotide-binding</keyword>
<keyword id="KW-0560">Oxidoreductase</keyword>
<keyword id="KW-1185">Reference proteome</keyword>
<name>G3P_SALTY</name>